<gene>
    <name type="primary">NTC20</name>
    <name type="synonym">SNT384</name>
    <name type="ordered locus">YBR188C</name>
    <name type="ORF">YBR1316</name>
</gene>
<comment type="function">
    <text evidence="1 2 3 6">Involved in pre-mRNA splicing. As a component of the NTC complex, associates to the spliceosome to mediate conformational rearrangement or to stabilize the structure of the spliceosome after U4 snRNA dissociation, which leads to spliceosome maturation.</text>
</comment>
<comment type="subunit">
    <text evidence="1 2 3 4 5">Belongs to the NTC complex (or PRP19-associated complex), composed of at least CEF1, CLF1, ISY1, NTC20, SNT309, SYF1, SYF2, and PRP19. The NTC complex associates with the spliceosome after the release of the U1 and U4 snRNAs and forms the CWC spliceosome subcomplex (or CEF1-associated complex) reminiscent of a late-stage spliceosome composed also of the U2, U5 and U6 snRNAs and at least BUD13, BRR2, CDC40, CUS1, CWC2, CWC15, CWC21, CWC22, CWC23, CWC24, CWC25, CWC27, ECM2, HSH155, IST3, LEA1, MSL1, PRP8, PRP9, PRP11, PRP21, PRP22, PRP45, PRP46, SLU7, SMB1, SMD1, SMD2, SMD3, SMX2, SMX3, SNU114, SPP2, RSE1 and YJU2. Interacts with CEF1, CLF1, ISY1, PRP46, and SYF1.</text>
</comment>
<comment type="interaction">
    <interactant intactId="EBI-20921">
        <id>P38302</id>
    </interactant>
    <interactant intactId="EBI-476">
        <id>Q03654</id>
        <label>CEF1</label>
    </interactant>
    <organismsDiffer>false</organismsDiffer>
    <experiments>5</experiments>
</comment>
<comment type="interaction">
    <interactant intactId="EBI-20921">
        <id>P38302</id>
    </interactant>
    <interactant intactId="EBI-484">
        <id>Q12309</id>
        <label>CLF1</label>
    </interactant>
    <organismsDiffer>false</organismsDiffer>
    <experiments>7</experiments>
</comment>
<comment type="interaction">
    <interactant intactId="EBI-20921">
        <id>P38302</id>
    </interactant>
    <interactant intactId="EBI-9382">
        <id>P21374</id>
        <label>ISY1</label>
    </interactant>
    <organismsDiffer>false</organismsDiffer>
    <experiments>2</experiments>
</comment>
<comment type="interaction">
    <interactant intactId="EBI-20921">
        <id>P38302</id>
    </interactant>
    <interactant intactId="EBI-493">
        <id>P32523</id>
        <label>PRP19</label>
    </interactant>
    <organismsDiffer>false</organismsDiffer>
    <experiments>6</experiments>
</comment>
<comment type="interaction">
    <interactant intactId="EBI-20921">
        <id>P38302</id>
    </interactant>
    <interactant intactId="EBI-818">
        <id>Q06091</id>
        <label>SNT309</label>
    </interactant>
    <organismsDiffer>false</organismsDiffer>
    <experiments>3</experiments>
</comment>
<comment type="interaction">
    <interactant intactId="EBI-20921">
        <id>P38302</id>
    </interactant>
    <interactant intactId="EBI-540">
        <id>Q04048</id>
        <label>SYF1</label>
    </interactant>
    <organismsDiffer>false</organismsDiffer>
    <experiments>7</experiments>
</comment>
<comment type="interaction">
    <interactant intactId="EBI-20921">
        <id>P38302</id>
    </interactant>
    <interactant intactId="EBI-23308">
        <id>P53277</id>
        <label>SYF2</label>
    </interactant>
    <organismsDiffer>false</organismsDiffer>
    <experiments>3</experiments>
</comment>
<comment type="subcellular location">
    <subcellularLocation>
        <location evidence="7">Nucleus</location>
    </subcellularLocation>
</comment>
<comment type="miscellaneous">
    <text evidence="8">Present with 1430 molecules/cell in log phase SD medium.</text>
</comment>
<sequence>MPSLRDLSLERDQELNQLRARINQLGKTGKEEANDFVGLNISNEPVYDTVIQTGQSSNATNSFVQETIQKTKQKESGQPYIIPQKNEHQRYIDKVCETSDLKAKLAPIMEVLEKKTNEKIKGIIRKRVLQEPDRDNDDSG</sequence>
<accession>P38302</accession>
<accession>D6VQI3</accession>
<feature type="chain" id="PRO_0000057974" description="Pre-mRNA-splicing factor NTC20">
    <location>
        <begin position="1"/>
        <end position="140"/>
    </location>
</feature>
<feature type="modified residue" description="Phosphoserine" evidence="9 10">
    <location>
        <position position="139"/>
    </location>
</feature>
<feature type="turn" evidence="11">
    <location>
        <begin position="2"/>
        <end position="4"/>
    </location>
</feature>
<feature type="helix" evidence="11">
    <location>
        <begin position="5"/>
        <end position="23"/>
    </location>
</feature>
<feature type="helix" evidence="11">
    <location>
        <begin position="99"/>
        <end position="122"/>
    </location>
</feature>
<reference key="1">
    <citation type="journal article" date="1994" name="Yeast">
        <title>A 12.5 kb fragment of the yeast chromosome II contains two adjacent genes encoding ribosomal proteins and six putative new genes, one of which encodes a putative transcriptional factor.</title>
        <authorList>
            <person name="Demolis N."/>
            <person name="Jacquet M."/>
            <person name="Mallet L."/>
        </authorList>
    </citation>
    <scope>NUCLEOTIDE SEQUENCE [LARGE SCALE GENOMIC DNA]</scope>
    <source>
        <strain>ATCC 204508 / S288c</strain>
    </source>
</reference>
<reference key="2">
    <citation type="journal article" date="2014" name="G3 (Bethesda)">
        <title>The reference genome sequence of Saccharomyces cerevisiae: Then and now.</title>
        <authorList>
            <person name="Engel S.R."/>
            <person name="Dietrich F.S."/>
            <person name="Fisk D.G."/>
            <person name="Binkley G."/>
            <person name="Balakrishnan R."/>
            <person name="Costanzo M.C."/>
            <person name="Dwight S.S."/>
            <person name="Hitz B.C."/>
            <person name="Karra K."/>
            <person name="Nash R.S."/>
            <person name="Weng S."/>
            <person name="Wong E.D."/>
            <person name="Lloyd P."/>
            <person name="Skrzypek M.S."/>
            <person name="Miyasato S.R."/>
            <person name="Simison M."/>
            <person name="Cherry J.M."/>
        </authorList>
    </citation>
    <scope>GENOME REANNOTATION</scope>
    <source>
        <strain>ATCC 204508 / S288c</strain>
    </source>
</reference>
<reference key="3">
    <citation type="journal article" date="1994" name="EMBO J.">
        <title>Complete DNA sequence of yeast chromosome II.</title>
        <authorList>
            <person name="Feldmann H."/>
            <person name="Aigle M."/>
            <person name="Aljinovic G."/>
            <person name="Andre B."/>
            <person name="Baclet M.C."/>
            <person name="Barthe C."/>
            <person name="Baur A."/>
            <person name="Becam A.-M."/>
            <person name="Biteau N."/>
            <person name="Boles E."/>
            <person name="Brandt T."/>
            <person name="Brendel M."/>
            <person name="Brueckner M."/>
            <person name="Bussereau F."/>
            <person name="Christiansen C."/>
            <person name="Contreras R."/>
            <person name="Crouzet M."/>
            <person name="Cziepluch C."/>
            <person name="Demolis N."/>
            <person name="Delaveau T."/>
            <person name="Doignon F."/>
            <person name="Domdey H."/>
            <person name="Duesterhus S."/>
            <person name="Dubois E."/>
            <person name="Dujon B."/>
            <person name="El Bakkoury M."/>
            <person name="Entian K.-D."/>
            <person name="Feuermann M."/>
            <person name="Fiers W."/>
            <person name="Fobo G.M."/>
            <person name="Fritz C."/>
            <person name="Gassenhuber J."/>
            <person name="Glansdorff N."/>
            <person name="Goffeau A."/>
            <person name="Grivell L.A."/>
            <person name="de Haan M."/>
            <person name="Hein C."/>
            <person name="Herbert C.J."/>
            <person name="Hollenberg C.P."/>
            <person name="Holmstroem K."/>
            <person name="Jacq C."/>
            <person name="Jacquet M."/>
            <person name="Jauniaux J.-C."/>
            <person name="Jonniaux J.-L."/>
            <person name="Kallesoee T."/>
            <person name="Kiesau P."/>
            <person name="Kirchrath L."/>
            <person name="Koetter P."/>
            <person name="Korol S."/>
            <person name="Liebl S."/>
            <person name="Logghe M."/>
            <person name="Lohan A.J.E."/>
            <person name="Louis E.J."/>
            <person name="Li Z.Y."/>
            <person name="Maat M.J."/>
            <person name="Mallet L."/>
            <person name="Mannhaupt G."/>
            <person name="Messenguy F."/>
            <person name="Miosga T."/>
            <person name="Molemans F."/>
            <person name="Mueller S."/>
            <person name="Nasr F."/>
            <person name="Obermaier B."/>
            <person name="Perea J."/>
            <person name="Pierard A."/>
            <person name="Piravandi E."/>
            <person name="Pohl F.M."/>
            <person name="Pohl T.M."/>
            <person name="Potier S."/>
            <person name="Proft M."/>
            <person name="Purnelle B."/>
            <person name="Ramezani Rad M."/>
            <person name="Rieger M."/>
            <person name="Rose M."/>
            <person name="Schaaff-Gerstenschlaeger I."/>
            <person name="Scherens B."/>
            <person name="Schwarzlose C."/>
            <person name="Skala J."/>
            <person name="Slonimski P.P."/>
            <person name="Smits P.H.M."/>
            <person name="Souciet J.-L."/>
            <person name="Steensma H.Y."/>
            <person name="Stucka R."/>
            <person name="Urrestarazu L.A."/>
            <person name="van der Aart Q.J.M."/>
            <person name="Van Dyck L."/>
            <person name="Vassarotti A."/>
            <person name="Vetter I."/>
            <person name="Vierendeels F."/>
            <person name="Vissers S."/>
            <person name="Wagner G."/>
            <person name="de Wergifosse P."/>
            <person name="Wolfe K.H."/>
            <person name="Zagulski M."/>
            <person name="Zimmermann F.K."/>
            <person name="Mewes H.-W."/>
            <person name="Kleine K."/>
        </authorList>
    </citation>
    <scope>NUCLEOTIDE SEQUENCE [LARGE SCALE GENOMIC DNA]</scope>
    <source>
        <strain>ATCC 204508 / S288c</strain>
    </source>
</reference>
<reference key="4">
    <citation type="journal article" date="2007" name="Genome Res.">
        <title>Approaching a complete repository of sequence-verified protein-encoding clones for Saccharomyces cerevisiae.</title>
        <authorList>
            <person name="Hu Y."/>
            <person name="Rolfs A."/>
            <person name="Bhullar B."/>
            <person name="Murthy T.V.S."/>
            <person name="Zhu C."/>
            <person name="Berger M.F."/>
            <person name="Camargo A.A."/>
            <person name="Kelley F."/>
            <person name="McCarron S."/>
            <person name="Jepson D."/>
            <person name="Richardson A."/>
            <person name="Raphael J."/>
            <person name="Moreira D."/>
            <person name="Taycher E."/>
            <person name="Zuo D."/>
            <person name="Mohr S."/>
            <person name="Kane M.F."/>
            <person name="Williamson J."/>
            <person name="Simpson A.J.G."/>
            <person name="Bulyk M.L."/>
            <person name="Harlow E."/>
            <person name="Marsischky G."/>
            <person name="Kolodner R.D."/>
            <person name="LaBaer J."/>
        </authorList>
    </citation>
    <scope>NUCLEOTIDE SEQUENCE [GENOMIC DNA]</scope>
    <source>
        <strain>ATCC 204508 / S288c</strain>
    </source>
</reference>
<reference key="5">
    <citation type="journal article" date="2000" name="Genetics">
        <title>Genetic and physical interactions between factors involved in both cell cycle progression and pre-mRNA splicing in Saccharomyces cerevisiae.</title>
        <authorList>
            <person name="Ben-Yehuda S."/>
            <person name="Dix I."/>
            <person name="Russell C.S."/>
            <person name="McGarvey M."/>
            <person name="Beggs J.D."/>
            <person name="Kupiec M."/>
        </authorList>
    </citation>
    <scope>FUNCTION</scope>
    <scope>INTERACTION WITH CEF1; CLF1 AND SYF1</scope>
</reference>
<reference key="6">
    <citation type="journal article" date="2001" name="J. Biol. Chem.">
        <title>Identification and characterization of two novel components of the Prp19p-associated complex, Ntc30p and Ntc20p.</title>
        <authorList>
            <person name="Chen C.-H."/>
            <person name="Tsai W.-Y."/>
            <person name="Chen H.-R."/>
            <person name="Wang C.-H."/>
            <person name="Cheng S.-C."/>
        </authorList>
    </citation>
    <scope>FUNCTION</scope>
    <scope>INTERACTION WITH CEF1</scope>
    <scope>IDENTIFICATION IN THE PRP19-ASSOCIATED COMPLEX</scope>
</reference>
<reference key="7">
    <citation type="journal article" date="2002" name="Mol. Cell. Biol.">
        <title>Proteomics analysis reveals stable multiprotein complexes in both fission and budding yeasts containing Myb-related Cdc5p/Cef1p, novel pre-mRNA splicing factors, and snRNAs.</title>
        <authorList>
            <person name="Ohi M.D."/>
            <person name="Link A.J."/>
            <person name="Ren L."/>
            <person name="Jennings J.L."/>
            <person name="McDonald W.H."/>
            <person name="Gould K.L."/>
        </authorList>
    </citation>
    <scope>IDENTIFICATION IN THE CWC COMPLEX</scope>
    <scope>IDENTIFICATION BY MASS SPECTROMETRY</scope>
</reference>
<reference key="8">
    <citation type="journal article" date="2002" name="Nucleic Acids Res.">
        <title>Functional and physical interactions between components of the Prp19p-associated complex.</title>
        <authorList>
            <person name="Chen C.-H."/>
            <person name="Yu W.-C."/>
            <person name="Tsao T.Y."/>
            <person name="Wang L.-Y."/>
            <person name="Chen H.-R."/>
            <person name="Lin J.-Y."/>
            <person name="Tsai W.-Y."/>
            <person name="Cheng S.-C."/>
        </authorList>
    </citation>
    <scope>FUNCTION</scope>
    <scope>IDENTIFICATION IN THE PRP19-ASSOCIATED COMPLEX</scope>
</reference>
<reference key="9">
    <citation type="journal article" date="2002" name="RNA">
        <title>Characterization of interactions among the Cef1p-Prp19p-associated splicing complex.</title>
        <authorList>
            <person name="Ohi M.D."/>
            <person name="Gould K.L."/>
        </authorList>
    </citation>
    <scope>INTERACTION WITH CLF1; PRP46 AND SYF1</scope>
</reference>
<reference key="10">
    <citation type="journal article" date="2003" name="Genetics">
        <title>Genetic interactions with CLF1 identify additional pre-mRNA splicing factors and a link between activators of yeast vesicular transport and splicing.</title>
        <authorList>
            <person name="Vincent K."/>
            <person name="Wang Q."/>
            <person name="Jay S."/>
            <person name="Hobbs K."/>
            <person name="Rymond B.C."/>
        </authorList>
    </citation>
    <scope>FUNCTION</scope>
</reference>
<reference key="11">
    <citation type="journal article" date="2003" name="Nature">
        <title>Global analysis of protein localization in budding yeast.</title>
        <authorList>
            <person name="Huh W.-K."/>
            <person name="Falvo J.V."/>
            <person name="Gerke L.C."/>
            <person name="Carroll A.S."/>
            <person name="Howson R.W."/>
            <person name="Weissman J.S."/>
            <person name="O'Shea E.K."/>
        </authorList>
    </citation>
    <scope>SUBCELLULAR LOCATION [LARGE SCALE ANALYSIS]</scope>
</reference>
<reference key="12">
    <citation type="journal article" date="2003" name="Nature">
        <title>Global analysis of protein expression in yeast.</title>
        <authorList>
            <person name="Ghaemmaghami S."/>
            <person name="Huh W.-K."/>
            <person name="Bower K."/>
            <person name="Howson R.W."/>
            <person name="Belle A."/>
            <person name="Dephoure N."/>
            <person name="O'Shea E.K."/>
            <person name="Weissman J.S."/>
        </authorList>
    </citation>
    <scope>LEVEL OF PROTEIN EXPRESSION [LARGE SCALE ANALYSIS]</scope>
</reference>
<reference key="13">
    <citation type="journal article" date="2008" name="Mol. Cell. Proteomics">
        <title>A multidimensional chromatography technology for in-depth phosphoproteome analysis.</title>
        <authorList>
            <person name="Albuquerque C.P."/>
            <person name="Smolka M.B."/>
            <person name="Payne S.H."/>
            <person name="Bafna V."/>
            <person name="Eng J."/>
            <person name="Zhou H."/>
        </authorList>
    </citation>
    <scope>PHOSPHORYLATION [LARGE SCALE ANALYSIS] AT SER-139</scope>
    <scope>IDENTIFICATION BY MASS SPECTROMETRY [LARGE SCALE ANALYSIS]</scope>
</reference>
<reference key="14">
    <citation type="journal article" date="2009" name="Science">
        <title>Global analysis of Cdk1 substrate phosphorylation sites provides insights into evolution.</title>
        <authorList>
            <person name="Holt L.J."/>
            <person name="Tuch B.B."/>
            <person name="Villen J."/>
            <person name="Johnson A.D."/>
            <person name="Gygi S.P."/>
            <person name="Morgan D.O."/>
        </authorList>
    </citation>
    <scope>PHOSPHORYLATION [LARGE SCALE ANALYSIS] AT SER-139</scope>
    <scope>IDENTIFICATION BY MASS SPECTROMETRY [LARGE SCALE ANALYSIS]</scope>
</reference>
<proteinExistence type="evidence at protein level"/>
<protein>
    <recommendedName>
        <fullName>Pre-mRNA-splicing factor NTC20</fullName>
    </recommendedName>
    <alternativeName>
        <fullName>PRP19-associated complex protein 20</fullName>
    </alternativeName>
    <alternativeName>
        <fullName>Synergistic to PRP19 mutation protein 384</fullName>
    </alternativeName>
</protein>
<organism>
    <name type="scientific">Saccharomyces cerevisiae (strain ATCC 204508 / S288c)</name>
    <name type="common">Baker's yeast</name>
    <dbReference type="NCBI Taxonomy" id="559292"/>
    <lineage>
        <taxon>Eukaryota</taxon>
        <taxon>Fungi</taxon>
        <taxon>Dikarya</taxon>
        <taxon>Ascomycota</taxon>
        <taxon>Saccharomycotina</taxon>
        <taxon>Saccharomycetes</taxon>
        <taxon>Saccharomycetales</taxon>
        <taxon>Saccharomycetaceae</taxon>
        <taxon>Saccharomyces</taxon>
    </lineage>
</organism>
<evidence type="ECO:0000269" key="1">
    <source>
    </source>
</evidence>
<evidence type="ECO:0000269" key="2">
    <source>
    </source>
</evidence>
<evidence type="ECO:0000269" key="3">
    <source>
    </source>
</evidence>
<evidence type="ECO:0000269" key="4">
    <source>
    </source>
</evidence>
<evidence type="ECO:0000269" key="5">
    <source>
    </source>
</evidence>
<evidence type="ECO:0000269" key="6">
    <source>
    </source>
</evidence>
<evidence type="ECO:0000269" key="7">
    <source>
    </source>
</evidence>
<evidence type="ECO:0000269" key="8">
    <source>
    </source>
</evidence>
<evidence type="ECO:0007744" key="9">
    <source>
    </source>
</evidence>
<evidence type="ECO:0007744" key="10">
    <source>
    </source>
</evidence>
<evidence type="ECO:0007829" key="11">
    <source>
        <dbReference type="PDB" id="9DTR"/>
    </source>
</evidence>
<name>NTC20_YEAST</name>
<dbReference type="EMBL" id="U02073">
    <property type="protein sequence ID" value="AAB60285.1"/>
    <property type="molecule type" value="Genomic_DNA"/>
</dbReference>
<dbReference type="EMBL" id="Z36057">
    <property type="protein sequence ID" value="CAA85149.1"/>
    <property type="molecule type" value="Genomic_DNA"/>
</dbReference>
<dbReference type="EMBL" id="AY558127">
    <property type="protein sequence ID" value="AAS56453.1"/>
    <property type="molecule type" value="Genomic_DNA"/>
</dbReference>
<dbReference type="EMBL" id="BK006936">
    <property type="protein sequence ID" value="DAA07303.1"/>
    <property type="molecule type" value="Genomic_DNA"/>
</dbReference>
<dbReference type="PIR" id="S46060">
    <property type="entry name" value="S46060"/>
</dbReference>
<dbReference type="RefSeq" id="NP_009747.3">
    <property type="nucleotide sequence ID" value="NM_001178536.3"/>
</dbReference>
<dbReference type="PDB" id="9DTR">
    <property type="method" value="EM"/>
    <property type="resolution" value="2.31 A"/>
    <property type="chains" value="Z=1-140"/>
</dbReference>
<dbReference type="PDBsum" id="9DTR"/>
<dbReference type="EMDB" id="EMD-47157"/>
<dbReference type="SMR" id="P38302"/>
<dbReference type="BioGRID" id="32886">
    <property type="interactions" value="97"/>
</dbReference>
<dbReference type="ComplexPortal" id="CPX-1651">
    <property type="entry name" value="PRP19-associated complex"/>
</dbReference>
<dbReference type="ComplexPortal" id="CPX-1885">
    <property type="entry name" value="NineTeen complex"/>
</dbReference>
<dbReference type="DIP" id="DIP-1683N"/>
<dbReference type="FunCoup" id="P38302">
    <property type="interactions" value="169"/>
</dbReference>
<dbReference type="IntAct" id="P38302">
    <property type="interactions" value="42"/>
</dbReference>
<dbReference type="MINT" id="P38302"/>
<dbReference type="STRING" id="4932.YBR188C"/>
<dbReference type="iPTMnet" id="P38302"/>
<dbReference type="PaxDb" id="4932-YBR188C"/>
<dbReference type="PeptideAtlas" id="P38302"/>
<dbReference type="TopDownProteomics" id="P38302"/>
<dbReference type="EnsemblFungi" id="YBR188C_mRNA">
    <property type="protein sequence ID" value="YBR188C"/>
    <property type="gene ID" value="YBR188C"/>
</dbReference>
<dbReference type="GeneID" id="852486"/>
<dbReference type="KEGG" id="sce:YBR188C"/>
<dbReference type="AGR" id="SGD:S000000392"/>
<dbReference type="SGD" id="S000000392">
    <property type="gene designation" value="NTC20"/>
</dbReference>
<dbReference type="VEuPathDB" id="FungiDB:YBR188C"/>
<dbReference type="HOGENOM" id="CLU_1836689_0_0_1"/>
<dbReference type="InParanoid" id="P38302"/>
<dbReference type="OMA" id="PQKNEHQ"/>
<dbReference type="OrthoDB" id="4062707at2759"/>
<dbReference type="BioCyc" id="YEAST:G3O-29131-MONOMER"/>
<dbReference type="BioGRID-ORCS" id="852486">
    <property type="hits" value="3 hits in 10 CRISPR screens"/>
</dbReference>
<dbReference type="PRO" id="PR:P38302"/>
<dbReference type="Proteomes" id="UP000002311">
    <property type="component" value="Chromosome II"/>
</dbReference>
<dbReference type="RNAct" id="P38302">
    <property type="molecule type" value="protein"/>
</dbReference>
<dbReference type="GO" id="GO:0000974">
    <property type="term" value="C:Prp19 complex"/>
    <property type="evidence" value="ECO:0000314"/>
    <property type="project" value="SGD"/>
</dbReference>
<dbReference type="GO" id="GO:0071006">
    <property type="term" value="C:U2-type catalytic step 1 spliceosome"/>
    <property type="evidence" value="ECO:0000314"/>
    <property type="project" value="SGD"/>
</dbReference>
<dbReference type="GO" id="GO:0000398">
    <property type="term" value="P:mRNA splicing, via spliceosome"/>
    <property type="evidence" value="ECO:0000316"/>
    <property type="project" value="SGD"/>
</dbReference>
<keyword id="KW-0002">3D-structure</keyword>
<keyword id="KW-0507">mRNA processing</keyword>
<keyword id="KW-0508">mRNA splicing</keyword>
<keyword id="KW-0539">Nucleus</keyword>
<keyword id="KW-0597">Phosphoprotein</keyword>
<keyword id="KW-1185">Reference proteome</keyword>
<keyword id="KW-0747">Spliceosome</keyword>